<comment type="function">
    <text evidence="1">Catalyzes the conversion of hemimercaptal, formed from methylglyoxal and glutathione, to S-lactoylglutathione.</text>
</comment>
<comment type="catalytic activity">
    <reaction>
        <text>(R)-S-lactoylglutathione = methylglyoxal + glutathione</text>
        <dbReference type="Rhea" id="RHEA:19069"/>
        <dbReference type="ChEBI" id="CHEBI:17158"/>
        <dbReference type="ChEBI" id="CHEBI:57474"/>
        <dbReference type="ChEBI" id="CHEBI:57925"/>
        <dbReference type="EC" id="4.4.1.5"/>
    </reaction>
</comment>
<comment type="cofactor">
    <cofactor evidence="1">
        <name>Zn(2+)</name>
        <dbReference type="ChEBI" id="CHEBI:29105"/>
    </cofactor>
    <text evidence="1">Binds 1 zinc ion per subunit.</text>
</comment>
<comment type="pathway">
    <text>Secondary metabolite metabolism; methylglyoxal degradation; (R)-lactate from methylglyoxal: step 1/2.</text>
</comment>
<comment type="similarity">
    <text evidence="4">Belongs to the glyoxalase I family.</text>
</comment>
<reference key="1">
    <citation type="submission" date="1997-05" db="EMBL/GenBank/DDBJ databases">
        <authorList>
            <person name="Sopory S.K."/>
        </authorList>
    </citation>
    <scope>NUCLEOTIDE SEQUENCE [MRNA]</scope>
    <source>
        <strain>cv. Pusa Bold</strain>
        <tissue>Leaf</tissue>
    </source>
</reference>
<gene>
    <name type="primary">GLY I</name>
</gene>
<accession>O04885</accession>
<keyword id="KW-0456">Lyase</keyword>
<keyword id="KW-0479">Metal-binding</keyword>
<keyword id="KW-0862">Zinc</keyword>
<proteinExistence type="evidence at transcript level"/>
<protein>
    <recommendedName>
        <fullName>Lactoylglutathione lyase</fullName>
        <ecNumber>4.4.1.5</ecNumber>
    </recommendedName>
    <alternativeName>
        <fullName>Aldoketomutase</fullName>
    </alternativeName>
    <alternativeName>
        <fullName>Glyoxalase I</fullName>
        <shortName>Glx I</shortName>
    </alternativeName>
    <alternativeName>
        <fullName>Ketone-aldehyde mutase</fullName>
    </alternativeName>
    <alternativeName>
        <fullName>Methylglyoxalase</fullName>
    </alternativeName>
    <alternativeName>
        <fullName>S-D-lactoylglutathione methylglyoxal lyase</fullName>
    </alternativeName>
</protein>
<dbReference type="EC" id="4.4.1.5"/>
<dbReference type="EMBL" id="Y13239">
    <property type="protein sequence ID" value="CAA73691.1"/>
    <property type="molecule type" value="mRNA"/>
</dbReference>
<dbReference type="SMR" id="O04885"/>
<dbReference type="BRENDA" id="4.4.1.5">
    <property type="organism ID" value="941"/>
</dbReference>
<dbReference type="UniPathway" id="UPA00619">
    <property type="reaction ID" value="UER00675"/>
</dbReference>
<dbReference type="GO" id="GO:0004462">
    <property type="term" value="F:lactoylglutathione lyase activity"/>
    <property type="evidence" value="ECO:0007669"/>
    <property type="project" value="UniProtKB-EC"/>
</dbReference>
<dbReference type="GO" id="GO:0046872">
    <property type="term" value="F:metal ion binding"/>
    <property type="evidence" value="ECO:0007669"/>
    <property type="project" value="UniProtKB-KW"/>
</dbReference>
<dbReference type="GO" id="GO:0009651">
    <property type="term" value="P:response to salt stress"/>
    <property type="evidence" value="ECO:0000304"/>
    <property type="project" value="AgBase"/>
</dbReference>
<dbReference type="GO" id="GO:0009414">
    <property type="term" value="P:response to water deprivation"/>
    <property type="evidence" value="ECO:0000304"/>
    <property type="project" value="AgBase"/>
</dbReference>
<dbReference type="CDD" id="cd07233">
    <property type="entry name" value="GlxI_Zn"/>
    <property type="match status" value="1"/>
</dbReference>
<dbReference type="FunFam" id="3.10.180.10:FF:000011">
    <property type="entry name" value="Lactoylglutathione lyase"/>
    <property type="match status" value="1"/>
</dbReference>
<dbReference type="Gene3D" id="3.10.180.10">
    <property type="entry name" value="2,3-Dihydroxybiphenyl 1,2-Dioxygenase, domain 1"/>
    <property type="match status" value="1"/>
</dbReference>
<dbReference type="InterPro" id="IPR029068">
    <property type="entry name" value="Glyas_Bleomycin-R_OHBP_Dase"/>
</dbReference>
<dbReference type="InterPro" id="IPR004360">
    <property type="entry name" value="Glyas_Fos-R_dOase_dom"/>
</dbReference>
<dbReference type="InterPro" id="IPR004361">
    <property type="entry name" value="Glyoxalase_1"/>
</dbReference>
<dbReference type="InterPro" id="IPR018146">
    <property type="entry name" value="Glyoxalase_1_CS"/>
</dbReference>
<dbReference type="InterPro" id="IPR037523">
    <property type="entry name" value="VOC"/>
</dbReference>
<dbReference type="NCBIfam" id="TIGR00068">
    <property type="entry name" value="glyox_I"/>
    <property type="match status" value="1"/>
</dbReference>
<dbReference type="PANTHER" id="PTHR10374:SF30">
    <property type="entry name" value="LACTOYLGLUTATHIONE LYASE"/>
    <property type="match status" value="1"/>
</dbReference>
<dbReference type="PANTHER" id="PTHR10374">
    <property type="entry name" value="LACTOYLGLUTATHIONE LYASE GLYOXALASE I"/>
    <property type="match status" value="1"/>
</dbReference>
<dbReference type="Pfam" id="PF00903">
    <property type="entry name" value="Glyoxalase"/>
    <property type="match status" value="1"/>
</dbReference>
<dbReference type="SUPFAM" id="SSF54593">
    <property type="entry name" value="Glyoxalase/Bleomycin resistance protein/Dihydroxybiphenyl dioxygenase"/>
    <property type="match status" value="1"/>
</dbReference>
<dbReference type="PROSITE" id="PS00934">
    <property type="entry name" value="GLYOXALASE_I_1"/>
    <property type="match status" value="1"/>
</dbReference>
<dbReference type="PROSITE" id="PS00935">
    <property type="entry name" value="GLYOXALASE_I_2"/>
    <property type="match status" value="1"/>
</dbReference>
<dbReference type="PROSITE" id="PS51819">
    <property type="entry name" value="VOC"/>
    <property type="match status" value="1"/>
</dbReference>
<organism>
    <name type="scientific">Brassica juncea</name>
    <name type="common">Indian mustard</name>
    <name type="synonym">Sinapis juncea</name>
    <dbReference type="NCBI Taxonomy" id="3707"/>
    <lineage>
        <taxon>Eukaryota</taxon>
        <taxon>Viridiplantae</taxon>
        <taxon>Streptophyta</taxon>
        <taxon>Embryophyta</taxon>
        <taxon>Tracheophyta</taxon>
        <taxon>Spermatophyta</taxon>
        <taxon>Magnoliopsida</taxon>
        <taxon>eudicotyledons</taxon>
        <taxon>Gunneridae</taxon>
        <taxon>Pentapetalae</taxon>
        <taxon>rosids</taxon>
        <taxon>malvids</taxon>
        <taxon>Brassicales</taxon>
        <taxon>Brassicaceae</taxon>
        <taxon>Brassiceae</taxon>
        <taxon>Brassica</taxon>
    </lineage>
</organism>
<name>LGUL_BRAJU</name>
<evidence type="ECO:0000250" key="1"/>
<evidence type="ECO:0000255" key="2">
    <source>
        <dbReference type="PROSITE-ProRule" id="PRU01163"/>
    </source>
</evidence>
<evidence type="ECO:0000256" key="3">
    <source>
        <dbReference type="SAM" id="MobiDB-lite"/>
    </source>
</evidence>
<evidence type="ECO:0000305" key="4"/>
<feature type="chain" id="PRO_0000168082" description="Lactoylglutathione lyase">
    <location>
        <begin position="1"/>
        <end position="185"/>
    </location>
</feature>
<feature type="domain" description="VOC" evidence="2">
    <location>
        <begin position="27"/>
        <end position="174"/>
    </location>
</feature>
<feature type="region of interest" description="Disordered" evidence="3">
    <location>
        <begin position="1"/>
        <end position="21"/>
    </location>
</feature>
<feature type="active site" description="Proton donor/acceptor" evidence="1">
    <location>
        <position position="170"/>
    </location>
</feature>
<feature type="binding site" evidence="1">
    <location>
        <position position="30"/>
    </location>
    <ligand>
        <name>substrate</name>
    </ligand>
</feature>
<feature type="binding site" evidence="1">
    <location>
        <position position="30"/>
    </location>
    <ligand>
        <name>Zn(2+)</name>
        <dbReference type="ChEBI" id="CHEBI:29105"/>
    </ligand>
</feature>
<feature type="binding site" evidence="1">
    <location>
        <position position="34"/>
    </location>
    <ligand>
        <name>substrate</name>
    </ligand>
</feature>
<feature type="binding site" evidence="1">
    <location>
        <position position="96"/>
    </location>
    <ligand>
        <name>Zn(2+)</name>
        <dbReference type="ChEBI" id="CHEBI:29105"/>
    </ligand>
</feature>
<feature type="binding site" evidence="1">
    <location>
        <position position="100"/>
    </location>
    <ligand>
        <name>substrate</name>
    </ligand>
</feature>
<feature type="binding site" evidence="1">
    <location>
        <position position="120"/>
    </location>
    <ligand>
        <name>substrate</name>
    </ligand>
</feature>
<feature type="binding site" evidence="1">
    <location>
        <position position="124"/>
    </location>
    <ligand>
        <name>substrate</name>
    </ligand>
</feature>
<feature type="binding site" evidence="1">
    <location>
        <position position="124"/>
    </location>
    <ligand>
        <name>Zn(2+)</name>
        <dbReference type="ChEBI" id="CHEBI:29105"/>
    </ligand>
</feature>
<feature type="binding site" evidence="1">
    <location>
        <begin position="154"/>
        <end position="155"/>
    </location>
    <ligand>
        <name>substrate</name>
    </ligand>
</feature>
<feature type="binding site" evidence="1">
    <location>
        <position position="170"/>
    </location>
    <ligand>
        <name>Zn(2+)</name>
        <dbReference type="ChEBI" id="CHEBI:29105"/>
    </ligand>
</feature>
<sequence length="185" mass="20783">MASEAKESPANNPGLSTVRDEATKGYIMQQTMFRVKDPKASLDFYSRVLGMSLLKRLDFSEMKFSLYFLGYEDTSTAPTDPTERTVWTFGRPATIELTHNWGTESDPEFKGYHNGNSEPRGFGHIGVTVDDVHKACERFEQLGVEFVKKPHDGKMKNIAFIKDPDGYWIEIFDLKTIGTTAGNAA</sequence>